<gene>
    <name evidence="1" type="primary">purT</name>
    <name type="ordered locus">KPK_1925</name>
</gene>
<dbReference type="EC" id="6.3.1.21" evidence="1"/>
<dbReference type="EMBL" id="CP000964">
    <property type="protein sequence ID" value="ACI06557.1"/>
    <property type="molecule type" value="Genomic_DNA"/>
</dbReference>
<dbReference type="SMR" id="B5XQ21"/>
<dbReference type="KEGG" id="kpe:KPK_1925"/>
<dbReference type="HOGENOM" id="CLU_011534_1_3_6"/>
<dbReference type="UniPathway" id="UPA00074">
    <property type="reaction ID" value="UER00127"/>
</dbReference>
<dbReference type="Proteomes" id="UP000001734">
    <property type="component" value="Chromosome"/>
</dbReference>
<dbReference type="GO" id="GO:0005829">
    <property type="term" value="C:cytosol"/>
    <property type="evidence" value="ECO:0007669"/>
    <property type="project" value="TreeGrafter"/>
</dbReference>
<dbReference type="GO" id="GO:0005524">
    <property type="term" value="F:ATP binding"/>
    <property type="evidence" value="ECO:0007669"/>
    <property type="project" value="UniProtKB-UniRule"/>
</dbReference>
<dbReference type="GO" id="GO:0000287">
    <property type="term" value="F:magnesium ion binding"/>
    <property type="evidence" value="ECO:0007669"/>
    <property type="project" value="InterPro"/>
</dbReference>
<dbReference type="GO" id="GO:0043815">
    <property type="term" value="F:phosphoribosylglycinamide formyltransferase 2 activity"/>
    <property type="evidence" value="ECO:0007669"/>
    <property type="project" value="UniProtKB-UniRule"/>
</dbReference>
<dbReference type="GO" id="GO:0004644">
    <property type="term" value="F:phosphoribosylglycinamide formyltransferase activity"/>
    <property type="evidence" value="ECO:0007669"/>
    <property type="project" value="InterPro"/>
</dbReference>
<dbReference type="GO" id="GO:0006189">
    <property type="term" value="P:'de novo' IMP biosynthetic process"/>
    <property type="evidence" value="ECO:0007669"/>
    <property type="project" value="UniProtKB-UniRule"/>
</dbReference>
<dbReference type="FunFam" id="3.30.1490.20:FF:000013">
    <property type="entry name" value="Formate-dependent phosphoribosylglycinamide formyltransferase"/>
    <property type="match status" value="1"/>
</dbReference>
<dbReference type="FunFam" id="3.30.470.20:FF:000027">
    <property type="entry name" value="Formate-dependent phosphoribosylglycinamide formyltransferase"/>
    <property type="match status" value="1"/>
</dbReference>
<dbReference type="FunFam" id="3.40.50.20:FF:000007">
    <property type="entry name" value="Formate-dependent phosphoribosylglycinamide formyltransferase"/>
    <property type="match status" value="1"/>
</dbReference>
<dbReference type="Gene3D" id="3.40.50.20">
    <property type="match status" value="1"/>
</dbReference>
<dbReference type="Gene3D" id="3.30.1490.20">
    <property type="entry name" value="ATP-grasp fold, A domain"/>
    <property type="match status" value="1"/>
</dbReference>
<dbReference type="Gene3D" id="3.30.470.20">
    <property type="entry name" value="ATP-grasp fold, B domain"/>
    <property type="match status" value="1"/>
</dbReference>
<dbReference type="HAMAP" id="MF_01643">
    <property type="entry name" value="PurT"/>
    <property type="match status" value="1"/>
</dbReference>
<dbReference type="InterPro" id="IPR011761">
    <property type="entry name" value="ATP-grasp"/>
</dbReference>
<dbReference type="InterPro" id="IPR003135">
    <property type="entry name" value="ATP-grasp_carboxylate-amine"/>
</dbReference>
<dbReference type="InterPro" id="IPR013815">
    <property type="entry name" value="ATP_grasp_subdomain_1"/>
</dbReference>
<dbReference type="InterPro" id="IPR016185">
    <property type="entry name" value="PreATP-grasp_dom_sf"/>
</dbReference>
<dbReference type="InterPro" id="IPR005862">
    <property type="entry name" value="PurT"/>
</dbReference>
<dbReference type="InterPro" id="IPR054350">
    <property type="entry name" value="PurT/PurK_preATP-grasp"/>
</dbReference>
<dbReference type="InterPro" id="IPR048740">
    <property type="entry name" value="PurT_C"/>
</dbReference>
<dbReference type="InterPro" id="IPR011054">
    <property type="entry name" value="Rudment_hybrid_motif"/>
</dbReference>
<dbReference type="NCBIfam" id="NF006766">
    <property type="entry name" value="PRK09288.1"/>
    <property type="match status" value="1"/>
</dbReference>
<dbReference type="NCBIfam" id="TIGR01142">
    <property type="entry name" value="purT"/>
    <property type="match status" value="1"/>
</dbReference>
<dbReference type="PANTHER" id="PTHR43055">
    <property type="entry name" value="FORMATE-DEPENDENT PHOSPHORIBOSYLGLYCINAMIDE FORMYLTRANSFERASE"/>
    <property type="match status" value="1"/>
</dbReference>
<dbReference type="PANTHER" id="PTHR43055:SF1">
    <property type="entry name" value="FORMATE-DEPENDENT PHOSPHORIBOSYLGLYCINAMIDE FORMYLTRANSFERASE"/>
    <property type="match status" value="1"/>
</dbReference>
<dbReference type="Pfam" id="PF02222">
    <property type="entry name" value="ATP-grasp"/>
    <property type="match status" value="1"/>
</dbReference>
<dbReference type="Pfam" id="PF21244">
    <property type="entry name" value="PurT_C"/>
    <property type="match status" value="1"/>
</dbReference>
<dbReference type="Pfam" id="PF22660">
    <property type="entry name" value="RS_preATP-grasp-like"/>
    <property type="match status" value="1"/>
</dbReference>
<dbReference type="SUPFAM" id="SSF56059">
    <property type="entry name" value="Glutathione synthetase ATP-binding domain-like"/>
    <property type="match status" value="1"/>
</dbReference>
<dbReference type="SUPFAM" id="SSF52440">
    <property type="entry name" value="PreATP-grasp domain"/>
    <property type="match status" value="1"/>
</dbReference>
<dbReference type="SUPFAM" id="SSF51246">
    <property type="entry name" value="Rudiment single hybrid motif"/>
    <property type="match status" value="1"/>
</dbReference>
<dbReference type="PROSITE" id="PS50975">
    <property type="entry name" value="ATP_GRASP"/>
    <property type="match status" value="1"/>
</dbReference>
<name>PURT_KLEP3</name>
<reference key="1">
    <citation type="journal article" date="2008" name="PLoS Genet.">
        <title>Complete genome sequence of the N2-fixing broad host range endophyte Klebsiella pneumoniae 342 and virulence predictions verified in mice.</title>
        <authorList>
            <person name="Fouts D.E."/>
            <person name="Tyler H.L."/>
            <person name="DeBoy R.T."/>
            <person name="Daugherty S."/>
            <person name="Ren Q."/>
            <person name="Badger J.H."/>
            <person name="Durkin A.S."/>
            <person name="Huot H."/>
            <person name="Shrivastava S."/>
            <person name="Kothari S."/>
            <person name="Dodson R.J."/>
            <person name="Mohamoud Y."/>
            <person name="Khouri H."/>
            <person name="Roesch L.F.W."/>
            <person name="Krogfelt K.A."/>
            <person name="Struve C."/>
            <person name="Triplett E.W."/>
            <person name="Methe B.A."/>
        </authorList>
    </citation>
    <scope>NUCLEOTIDE SEQUENCE [LARGE SCALE GENOMIC DNA]</scope>
    <source>
        <strain>342</strain>
    </source>
</reference>
<keyword id="KW-0067">ATP-binding</keyword>
<keyword id="KW-0436">Ligase</keyword>
<keyword id="KW-0460">Magnesium</keyword>
<keyword id="KW-0479">Metal-binding</keyword>
<keyword id="KW-0547">Nucleotide-binding</keyword>
<keyword id="KW-0658">Purine biosynthesis</keyword>
<protein>
    <recommendedName>
        <fullName evidence="1">Formate-dependent phosphoribosylglycinamide formyltransferase</fullName>
        <ecNumber evidence="1">6.3.1.21</ecNumber>
    </recommendedName>
    <alternativeName>
        <fullName evidence="1">5'-phosphoribosylglycinamide transformylase 2</fullName>
    </alternativeName>
    <alternativeName>
        <fullName evidence="1">Formate-dependent GAR transformylase</fullName>
    </alternativeName>
    <alternativeName>
        <fullName evidence="1">GAR transformylase 2</fullName>
        <shortName evidence="1">GART 2</shortName>
    </alternativeName>
    <alternativeName>
        <fullName evidence="1">Non-folate glycinamide ribonucleotide transformylase</fullName>
    </alternativeName>
    <alternativeName>
        <fullName evidence="1">Phosphoribosylglycinamide formyltransferase 2</fullName>
    </alternativeName>
</protein>
<feature type="chain" id="PRO_1000186882" description="Formate-dependent phosphoribosylglycinamide formyltransferase">
    <location>
        <begin position="1"/>
        <end position="392"/>
    </location>
</feature>
<feature type="domain" description="ATP-grasp" evidence="1">
    <location>
        <begin position="119"/>
        <end position="308"/>
    </location>
</feature>
<feature type="binding site" evidence="1">
    <location>
        <begin position="22"/>
        <end position="23"/>
    </location>
    <ligand>
        <name>N(1)-(5-phospho-beta-D-ribosyl)glycinamide</name>
        <dbReference type="ChEBI" id="CHEBI:143788"/>
    </ligand>
</feature>
<feature type="binding site" evidence="1">
    <location>
        <position position="82"/>
    </location>
    <ligand>
        <name>N(1)-(5-phospho-beta-D-ribosyl)glycinamide</name>
        <dbReference type="ChEBI" id="CHEBI:143788"/>
    </ligand>
</feature>
<feature type="binding site" evidence="1">
    <location>
        <position position="114"/>
    </location>
    <ligand>
        <name>ATP</name>
        <dbReference type="ChEBI" id="CHEBI:30616"/>
    </ligand>
</feature>
<feature type="binding site" evidence="1">
    <location>
        <position position="155"/>
    </location>
    <ligand>
        <name>ATP</name>
        <dbReference type="ChEBI" id="CHEBI:30616"/>
    </ligand>
</feature>
<feature type="binding site" evidence="1">
    <location>
        <begin position="160"/>
        <end position="165"/>
    </location>
    <ligand>
        <name>ATP</name>
        <dbReference type="ChEBI" id="CHEBI:30616"/>
    </ligand>
</feature>
<feature type="binding site" evidence="1">
    <location>
        <begin position="195"/>
        <end position="198"/>
    </location>
    <ligand>
        <name>ATP</name>
        <dbReference type="ChEBI" id="CHEBI:30616"/>
    </ligand>
</feature>
<feature type="binding site" evidence="1">
    <location>
        <position position="203"/>
    </location>
    <ligand>
        <name>ATP</name>
        <dbReference type="ChEBI" id="CHEBI:30616"/>
    </ligand>
</feature>
<feature type="binding site" evidence="1">
    <location>
        <position position="267"/>
    </location>
    <ligand>
        <name>Mg(2+)</name>
        <dbReference type="ChEBI" id="CHEBI:18420"/>
    </ligand>
</feature>
<feature type="binding site" evidence="1">
    <location>
        <position position="279"/>
    </location>
    <ligand>
        <name>Mg(2+)</name>
        <dbReference type="ChEBI" id="CHEBI:18420"/>
    </ligand>
</feature>
<feature type="binding site" evidence="1">
    <location>
        <position position="286"/>
    </location>
    <ligand>
        <name>N(1)-(5-phospho-beta-D-ribosyl)glycinamide</name>
        <dbReference type="ChEBI" id="CHEBI:143788"/>
    </ligand>
</feature>
<feature type="binding site" evidence="1">
    <location>
        <position position="355"/>
    </location>
    <ligand>
        <name>N(1)-(5-phospho-beta-D-ribosyl)glycinamide</name>
        <dbReference type="ChEBI" id="CHEBI:143788"/>
    </ligand>
</feature>
<feature type="binding site" evidence="1">
    <location>
        <begin position="362"/>
        <end position="363"/>
    </location>
    <ligand>
        <name>N(1)-(5-phospho-beta-D-ribosyl)glycinamide</name>
        <dbReference type="ChEBI" id="CHEBI:143788"/>
    </ligand>
</feature>
<accession>B5XQ21</accession>
<proteinExistence type="inferred from homology"/>
<organism>
    <name type="scientific">Klebsiella pneumoniae (strain 342)</name>
    <dbReference type="NCBI Taxonomy" id="507522"/>
    <lineage>
        <taxon>Bacteria</taxon>
        <taxon>Pseudomonadati</taxon>
        <taxon>Pseudomonadota</taxon>
        <taxon>Gammaproteobacteria</taxon>
        <taxon>Enterobacterales</taxon>
        <taxon>Enterobacteriaceae</taxon>
        <taxon>Klebsiella/Raoultella group</taxon>
        <taxon>Klebsiella</taxon>
        <taxon>Klebsiella pneumoniae complex</taxon>
    </lineage>
</organism>
<evidence type="ECO:0000255" key="1">
    <source>
        <dbReference type="HAMAP-Rule" id="MF_01643"/>
    </source>
</evidence>
<comment type="function">
    <text evidence="1">Involved in the de novo purine biosynthesis. Catalyzes the transfer of formate to 5-phospho-ribosyl-glycinamide (GAR), producing 5-phospho-ribosyl-N-formylglycinamide (FGAR). Formate is provided by PurU via hydrolysis of 10-formyl-tetrahydrofolate.</text>
</comment>
<comment type="catalytic activity">
    <reaction evidence="1">
        <text>N(1)-(5-phospho-beta-D-ribosyl)glycinamide + formate + ATP = N(2)-formyl-N(1)-(5-phospho-beta-D-ribosyl)glycinamide + ADP + phosphate + H(+)</text>
        <dbReference type="Rhea" id="RHEA:24829"/>
        <dbReference type="ChEBI" id="CHEBI:15378"/>
        <dbReference type="ChEBI" id="CHEBI:15740"/>
        <dbReference type="ChEBI" id="CHEBI:30616"/>
        <dbReference type="ChEBI" id="CHEBI:43474"/>
        <dbReference type="ChEBI" id="CHEBI:143788"/>
        <dbReference type="ChEBI" id="CHEBI:147286"/>
        <dbReference type="ChEBI" id="CHEBI:456216"/>
        <dbReference type="EC" id="6.3.1.21"/>
    </reaction>
    <physiologicalReaction direction="left-to-right" evidence="1">
        <dbReference type="Rhea" id="RHEA:24830"/>
    </physiologicalReaction>
</comment>
<comment type="pathway">
    <text evidence="1">Purine metabolism; IMP biosynthesis via de novo pathway; N(2)-formyl-N(1)-(5-phospho-D-ribosyl)glycinamide from N(1)-(5-phospho-D-ribosyl)glycinamide (formate route): step 1/1.</text>
</comment>
<comment type="subunit">
    <text evidence="1">Homodimer.</text>
</comment>
<comment type="similarity">
    <text evidence="1">Belongs to the PurK/PurT family.</text>
</comment>
<sequence>MTVLGTALRPAATKVMLLGSGELGKEVAIECQRLGIETIAVDRYPDAPAMQVAHRAHVINMLHGESLRALIEQEKPDYIVPEIEAIATDTLVELEQAGQKVVPTARAAKLTMNREGIRRLAAEELQLPTSSYRFADSEEGFRAAVTDIGLPCIVKPVMSSSGKGQSFIRSADQLSEAWRYAQQGGRAGAGRVIVEGVVNFDFEITLLTVSAVDGVHFCAPVGHRQEDGDYRESWQPQQMSDLALERAQAIARKVVLALGGHGLFGVELFVCGDEVIFSEVSPRPHDTGMVTLISQDLSEFALHVRAFLGLPVGAIRQYGPAASAVILPQLTSQNVSFGQLQSAVGAGLQLRLFGKPEIDGTRRLGVTLAVADSVEEAVARAKTAAAAVIVEG</sequence>